<reference key="1">
    <citation type="submission" date="2008-10" db="EMBL/GenBank/DDBJ databases">
        <title>Genome sequence of Bacillus cereus AH820.</title>
        <authorList>
            <person name="Dodson R.J."/>
            <person name="Durkin A.S."/>
            <person name="Rosovitz M.J."/>
            <person name="Rasko D.A."/>
            <person name="Hoffmaster A."/>
            <person name="Ravel J."/>
            <person name="Sutton G."/>
        </authorList>
    </citation>
    <scope>NUCLEOTIDE SEQUENCE [LARGE SCALE GENOMIC DNA]</scope>
    <source>
        <strain>AH820</strain>
    </source>
</reference>
<proteinExistence type="inferred from homology"/>
<accession>B7JSE3</accession>
<protein>
    <recommendedName>
        <fullName evidence="1">Putative 3-methyladenine DNA glycosylase</fullName>
        <ecNumber evidence="1">3.2.2.-</ecNumber>
    </recommendedName>
</protein>
<keyword id="KW-0227">DNA damage</keyword>
<keyword id="KW-0234">DNA repair</keyword>
<keyword id="KW-0378">Hydrolase</keyword>
<organism>
    <name type="scientific">Bacillus cereus (strain AH820)</name>
    <dbReference type="NCBI Taxonomy" id="405535"/>
    <lineage>
        <taxon>Bacteria</taxon>
        <taxon>Bacillati</taxon>
        <taxon>Bacillota</taxon>
        <taxon>Bacilli</taxon>
        <taxon>Bacillales</taxon>
        <taxon>Bacillaceae</taxon>
        <taxon>Bacillus</taxon>
        <taxon>Bacillus cereus group</taxon>
    </lineage>
</organism>
<sequence>MQAPPSFYEGDTLEVAKKLLGQKLVHIVNGIKRSGIIVEVEAYKGPDDKAAHSYGGRRTDRTEVMFGAPGHAYVYLIYGMYHCFNVITAPVGTPQGVLIRALEPVDGIEEIKLARYNKTDITKAQYKNLTNGPGKLCRALGITLEERGVSLQSDTLHIELVPEEKHISSQYKITAGPRINIDYAEEAVHYPWRFYYEGHPFVSKK</sequence>
<comment type="similarity">
    <text evidence="1">Belongs to the DNA glycosylase MPG family.</text>
</comment>
<feature type="chain" id="PRO_1000127745" description="Putative 3-methyladenine DNA glycosylase">
    <location>
        <begin position="1"/>
        <end position="205"/>
    </location>
</feature>
<evidence type="ECO:0000255" key="1">
    <source>
        <dbReference type="HAMAP-Rule" id="MF_00527"/>
    </source>
</evidence>
<dbReference type="EC" id="3.2.2.-" evidence="1"/>
<dbReference type="EMBL" id="CP001283">
    <property type="protein sequence ID" value="ACK91494.1"/>
    <property type="molecule type" value="Genomic_DNA"/>
</dbReference>
<dbReference type="RefSeq" id="WP_001148814.1">
    <property type="nucleotide sequence ID" value="NC_011773.1"/>
</dbReference>
<dbReference type="SMR" id="B7JSE3"/>
<dbReference type="KEGG" id="bcu:BCAH820_0960"/>
<dbReference type="HOGENOM" id="CLU_060471_0_2_9"/>
<dbReference type="Proteomes" id="UP000001363">
    <property type="component" value="Chromosome"/>
</dbReference>
<dbReference type="GO" id="GO:0003905">
    <property type="term" value="F:alkylbase DNA N-glycosylase activity"/>
    <property type="evidence" value="ECO:0007669"/>
    <property type="project" value="InterPro"/>
</dbReference>
<dbReference type="GO" id="GO:0003677">
    <property type="term" value="F:DNA binding"/>
    <property type="evidence" value="ECO:0007669"/>
    <property type="project" value="InterPro"/>
</dbReference>
<dbReference type="GO" id="GO:0006284">
    <property type="term" value="P:base-excision repair"/>
    <property type="evidence" value="ECO:0007669"/>
    <property type="project" value="InterPro"/>
</dbReference>
<dbReference type="CDD" id="cd00540">
    <property type="entry name" value="AAG"/>
    <property type="match status" value="1"/>
</dbReference>
<dbReference type="FunFam" id="3.10.300.10:FF:000001">
    <property type="entry name" value="Putative 3-methyladenine DNA glycosylase"/>
    <property type="match status" value="1"/>
</dbReference>
<dbReference type="Gene3D" id="3.10.300.10">
    <property type="entry name" value="Methylpurine-DNA glycosylase (MPG)"/>
    <property type="match status" value="1"/>
</dbReference>
<dbReference type="HAMAP" id="MF_00527">
    <property type="entry name" value="3MGH"/>
    <property type="match status" value="1"/>
</dbReference>
<dbReference type="InterPro" id="IPR011034">
    <property type="entry name" value="Formyl_transferase-like_C_sf"/>
</dbReference>
<dbReference type="InterPro" id="IPR003180">
    <property type="entry name" value="MPG"/>
</dbReference>
<dbReference type="InterPro" id="IPR036995">
    <property type="entry name" value="MPG_sf"/>
</dbReference>
<dbReference type="NCBIfam" id="TIGR00567">
    <property type="entry name" value="3mg"/>
    <property type="match status" value="1"/>
</dbReference>
<dbReference type="NCBIfam" id="NF002001">
    <property type="entry name" value="PRK00802.1-1"/>
    <property type="match status" value="1"/>
</dbReference>
<dbReference type="NCBIfam" id="NF002003">
    <property type="entry name" value="PRK00802.1-3"/>
    <property type="match status" value="1"/>
</dbReference>
<dbReference type="PANTHER" id="PTHR10429">
    <property type="entry name" value="DNA-3-METHYLADENINE GLYCOSYLASE"/>
    <property type="match status" value="1"/>
</dbReference>
<dbReference type="PANTHER" id="PTHR10429:SF0">
    <property type="entry name" value="DNA-3-METHYLADENINE GLYCOSYLASE"/>
    <property type="match status" value="1"/>
</dbReference>
<dbReference type="Pfam" id="PF02245">
    <property type="entry name" value="Pur_DNA_glyco"/>
    <property type="match status" value="1"/>
</dbReference>
<dbReference type="SUPFAM" id="SSF50486">
    <property type="entry name" value="FMT C-terminal domain-like"/>
    <property type="match status" value="1"/>
</dbReference>
<name>3MGH_BACC0</name>
<gene>
    <name type="ordered locus">BCAH820_0960</name>
</gene>